<reference key="1">
    <citation type="journal article" date="2011" name="J. Bacteriol.">
        <title>Complete genome sequence of the metabolically versatile plant growth-promoting endophyte, Variovorax paradoxus S110.</title>
        <authorList>
            <person name="Han J.I."/>
            <person name="Choi H.K."/>
            <person name="Lee S.W."/>
            <person name="Orwin P.M."/>
            <person name="Kim J."/>
            <person name="Laroe S.L."/>
            <person name="Kim T.G."/>
            <person name="O'Neil J."/>
            <person name="Leadbetter J.R."/>
            <person name="Lee S.Y."/>
            <person name="Hur C.G."/>
            <person name="Spain J.C."/>
            <person name="Ovchinnikova G."/>
            <person name="Goodwin L."/>
            <person name="Han C."/>
        </authorList>
    </citation>
    <scope>NUCLEOTIDE SEQUENCE [LARGE SCALE GENOMIC DNA]</scope>
    <source>
        <strain>S110</strain>
    </source>
</reference>
<evidence type="ECO:0000255" key="1">
    <source>
        <dbReference type="HAMAP-Rule" id="MF_00361"/>
    </source>
</evidence>
<protein>
    <recommendedName>
        <fullName evidence="1">NAD kinase</fullName>
        <ecNumber evidence="1">2.7.1.23</ecNumber>
    </recommendedName>
    <alternativeName>
        <fullName evidence="1">ATP-dependent NAD kinase</fullName>
    </alternativeName>
</protein>
<name>NADK_VARPS</name>
<keyword id="KW-0067">ATP-binding</keyword>
<keyword id="KW-0963">Cytoplasm</keyword>
<keyword id="KW-0418">Kinase</keyword>
<keyword id="KW-0520">NAD</keyword>
<keyword id="KW-0521">NADP</keyword>
<keyword id="KW-0547">Nucleotide-binding</keyword>
<keyword id="KW-0808">Transferase</keyword>
<dbReference type="EC" id="2.7.1.23" evidence="1"/>
<dbReference type="EMBL" id="CP001635">
    <property type="protein sequence ID" value="ACS20947.1"/>
    <property type="molecule type" value="Genomic_DNA"/>
</dbReference>
<dbReference type="SMR" id="C5CYY6"/>
<dbReference type="STRING" id="543728.Vapar_4336"/>
<dbReference type="KEGG" id="vap:Vapar_4336"/>
<dbReference type="eggNOG" id="COG0061">
    <property type="taxonomic scope" value="Bacteria"/>
</dbReference>
<dbReference type="HOGENOM" id="CLU_008831_0_1_4"/>
<dbReference type="OrthoDB" id="9774737at2"/>
<dbReference type="GO" id="GO:0005737">
    <property type="term" value="C:cytoplasm"/>
    <property type="evidence" value="ECO:0007669"/>
    <property type="project" value="UniProtKB-SubCell"/>
</dbReference>
<dbReference type="GO" id="GO:0005524">
    <property type="term" value="F:ATP binding"/>
    <property type="evidence" value="ECO:0007669"/>
    <property type="project" value="UniProtKB-KW"/>
</dbReference>
<dbReference type="GO" id="GO:0046872">
    <property type="term" value="F:metal ion binding"/>
    <property type="evidence" value="ECO:0007669"/>
    <property type="project" value="UniProtKB-UniRule"/>
</dbReference>
<dbReference type="GO" id="GO:0051287">
    <property type="term" value="F:NAD binding"/>
    <property type="evidence" value="ECO:0007669"/>
    <property type="project" value="UniProtKB-ARBA"/>
</dbReference>
<dbReference type="GO" id="GO:0003951">
    <property type="term" value="F:NAD+ kinase activity"/>
    <property type="evidence" value="ECO:0007669"/>
    <property type="project" value="UniProtKB-UniRule"/>
</dbReference>
<dbReference type="GO" id="GO:0019674">
    <property type="term" value="P:NAD metabolic process"/>
    <property type="evidence" value="ECO:0007669"/>
    <property type="project" value="InterPro"/>
</dbReference>
<dbReference type="GO" id="GO:0006741">
    <property type="term" value="P:NADP biosynthetic process"/>
    <property type="evidence" value="ECO:0007669"/>
    <property type="project" value="UniProtKB-UniRule"/>
</dbReference>
<dbReference type="Gene3D" id="3.40.50.10330">
    <property type="entry name" value="Probable inorganic polyphosphate/atp-NAD kinase, domain 1"/>
    <property type="match status" value="1"/>
</dbReference>
<dbReference type="Gene3D" id="2.60.200.30">
    <property type="entry name" value="Probable inorganic polyphosphate/atp-NAD kinase, domain 2"/>
    <property type="match status" value="1"/>
</dbReference>
<dbReference type="HAMAP" id="MF_00361">
    <property type="entry name" value="NAD_kinase"/>
    <property type="match status" value="1"/>
</dbReference>
<dbReference type="InterPro" id="IPR017438">
    <property type="entry name" value="ATP-NAD_kinase_N"/>
</dbReference>
<dbReference type="InterPro" id="IPR017437">
    <property type="entry name" value="ATP-NAD_kinase_PpnK-typ_C"/>
</dbReference>
<dbReference type="InterPro" id="IPR016064">
    <property type="entry name" value="NAD/diacylglycerol_kinase_sf"/>
</dbReference>
<dbReference type="InterPro" id="IPR002504">
    <property type="entry name" value="NADK"/>
</dbReference>
<dbReference type="NCBIfam" id="NF002561">
    <property type="entry name" value="PRK02155.1"/>
    <property type="match status" value="1"/>
</dbReference>
<dbReference type="PANTHER" id="PTHR20275">
    <property type="entry name" value="NAD KINASE"/>
    <property type="match status" value="1"/>
</dbReference>
<dbReference type="PANTHER" id="PTHR20275:SF0">
    <property type="entry name" value="NAD KINASE"/>
    <property type="match status" value="1"/>
</dbReference>
<dbReference type="Pfam" id="PF01513">
    <property type="entry name" value="NAD_kinase"/>
    <property type="match status" value="1"/>
</dbReference>
<dbReference type="Pfam" id="PF20143">
    <property type="entry name" value="NAD_kinase_C"/>
    <property type="match status" value="1"/>
</dbReference>
<dbReference type="SUPFAM" id="SSF111331">
    <property type="entry name" value="NAD kinase/diacylglycerol kinase-like"/>
    <property type="match status" value="1"/>
</dbReference>
<comment type="function">
    <text evidence="1">Involved in the regulation of the intracellular balance of NAD and NADP, and is a key enzyme in the biosynthesis of NADP. Catalyzes specifically the phosphorylation on 2'-hydroxyl of the adenosine moiety of NAD to yield NADP.</text>
</comment>
<comment type="catalytic activity">
    <reaction evidence="1">
        <text>NAD(+) + ATP = ADP + NADP(+) + H(+)</text>
        <dbReference type="Rhea" id="RHEA:18629"/>
        <dbReference type="ChEBI" id="CHEBI:15378"/>
        <dbReference type="ChEBI" id="CHEBI:30616"/>
        <dbReference type="ChEBI" id="CHEBI:57540"/>
        <dbReference type="ChEBI" id="CHEBI:58349"/>
        <dbReference type="ChEBI" id="CHEBI:456216"/>
        <dbReference type="EC" id="2.7.1.23"/>
    </reaction>
</comment>
<comment type="cofactor">
    <cofactor evidence="1">
        <name>a divalent metal cation</name>
        <dbReference type="ChEBI" id="CHEBI:60240"/>
    </cofactor>
</comment>
<comment type="subcellular location">
    <subcellularLocation>
        <location evidence="1">Cytoplasm</location>
    </subcellularLocation>
</comment>
<comment type="similarity">
    <text evidence="1">Belongs to the NAD kinase family.</text>
</comment>
<accession>C5CYY6</accession>
<feature type="chain" id="PRO_1000205435" description="NAD kinase">
    <location>
        <begin position="1"/>
        <end position="303"/>
    </location>
</feature>
<feature type="active site" description="Proton acceptor" evidence="1">
    <location>
        <position position="85"/>
    </location>
</feature>
<feature type="binding site" evidence="1">
    <location>
        <begin position="85"/>
        <end position="86"/>
    </location>
    <ligand>
        <name>NAD(+)</name>
        <dbReference type="ChEBI" id="CHEBI:57540"/>
    </ligand>
</feature>
<feature type="binding site" evidence="1">
    <location>
        <begin position="159"/>
        <end position="160"/>
    </location>
    <ligand>
        <name>NAD(+)</name>
        <dbReference type="ChEBI" id="CHEBI:57540"/>
    </ligand>
</feature>
<feature type="binding site" evidence="1">
    <location>
        <position position="187"/>
    </location>
    <ligand>
        <name>NAD(+)</name>
        <dbReference type="ChEBI" id="CHEBI:57540"/>
    </ligand>
</feature>
<feature type="binding site" evidence="1">
    <location>
        <position position="189"/>
    </location>
    <ligand>
        <name>NAD(+)</name>
        <dbReference type="ChEBI" id="CHEBI:57540"/>
    </ligand>
</feature>
<feature type="binding site" evidence="1">
    <location>
        <begin position="200"/>
        <end position="205"/>
    </location>
    <ligand>
        <name>NAD(+)</name>
        <dbReference type="ChEBI" id="CHEBI:57540"/>
    </ligand>
</feature>
<feature type="binding site" evidence="1">
    <location>
        <position position="224"/>
    </location>
    <ligand>
        <name>NAD(+)</name>
        <dbReference type="ChEBI" id="CHEBI:57540"/>
    </ligand>
</feature>
<feature type="binding site" evidence="1">
    <location>
        <position position="258"/>
    </location>
    <ligand>
        <name>NAD(+)</name>
        <dbReference type="ChEBI" id="CHEBI:57540"/>
    </ligand>
</feature>
<gene>
    <name evidence="1" type="primary">nadK</name>
    <name type="ordered locus">Vapar_4336</name>
</gene>
<sequence length="303" mass="32583">MTSRFRHVALIGKYQASGARAQADARDGVMEDIGAFLESQGCEVFVEKSAAEEADADASVGGRYQPLTVEEIGQRCDLGLVVGGDGTMLGIGRQLACYGIPLIGINRGRLGFITDIPLDNYQATLIPMLAGEYEEDHRSLMHAQVMRDGASVFDALAMNDVVVNRGATSGMVELRVSVGRHFVANQRADGLIIASPTGSTAYALSAGGPLLHPAVPGWVLVPIAPHTLSNRPVLLPDADEIVIELVAGRDASANFDMQSLASLAIGDRVVVRRSDFRVRFLHPRGWSYFDTLRKKLHWNEGGS</sequence>
<organism>
    <name type="scientific">Variovorax paradoxus (strain S110)</name>
    <dbReference type="NCBI Taxonomy" id="543728"/>
    <lineage>
        <taxon>Bacteria</taxon>
        <taxon>Pseudomonadati</taxon>
        <taxon>Pseudomonadota</taxon>
        <taxon>Betaproteobacteria</taxon>
        <taxon>Burkholderiales</taxon>
        <taxon>Comamonadaceae</taxon>
        <taxon>Variovorax</taxon>
    </lineage>
</organism>
<proteinExistence type="inferred from homology"/>